<keyword id="KW-0002">3D-structure</keyword>
<keyword id="KW-0963">Cytoplasm</keyword>
<keyword id="KW-1185">Reference proteome</keyword>
<keyword id="KW-0687">Ribonucleoprotein</keyword>
<keyword id="KW-0689">Ribosomal protein</keyword>
<keyword id="KW-0694">RNA-binding</keyword>
<keyword id="KW-0699">rRNA-binding</keyword>
<comment type="function">
    <text evidence="1 7">Component of the ribosome, a large ribonucleoprotein complex responsible for the synthesis of proteins in the cell. The small ribosomal subunit (SSU) binds messenger RNAs (mRNAs) and translates the encoded message by selecting cognate aminoacyl-transfer RNA (tRNA) molecules. The large subunit (LSU) contains the ribosomal catalytic site termed the peptidyl transferase center (PTC), which catalyzes the formation of peptide bonds, thereby polymerizing the amino acids delivered by tRNAs into a polypeptide chain. The nascent polypeptides leave the ribosome through a tunnel in the LSU and interact with protein factors that function in enzymatic processing, targeting, and the membrane insertion of nascent chains at the exit of the ribosomal tunnel (Probable). RPS9B is involved in nucleolar processing of pre-18S ribosomal RNA and ribosome assembly (By similarity).</text>
</comment>
<comment type="subunit">
    <text evidence="4">Component of the small ribosomal subunit (PubMed:35613268). Mature ribosomes consist of a small (40S) and a large (60S) subunit (PubMed:35613268). The 40S subunit contains about 32 different proteins and 1 molecule of RNA (18S) (PubMed:35613268). The 60S subunit contains 45 different proteins and 3 molecules of RNA (25S, 5.8S and 5S) (PubMed:35613268).</text>
</comment>
<comment type="subcellular location">
    <subcellularLocation>
        <location evidence="7">Cytoplasm</location>
    </subcellularLocation>
</comment>
<comment type="similarity">
    <text evidence="6">Belongs to the universal ribosomal protein uS4 family.</text>
</comment>
<dbReference type="EMBL" id="CP017624">
    <property type="protein sequence ID" value="AOW27411.1"/>
    <property type="molecule type" value="Genomic_DNA"/>
</dbReference>
<dbReference type="RefSeq" id="XP_019330762.1">
    <property type="nucleotide sequence ID" value="XM_019475217.1"/>
</dbReference>
<dbReference type="PDB" id="7PZY">
    <property type="method" value="EM"/>
    <property type="resolution" value="2.32 A"/>
    <property type="chains" value="K=1-189"/>
</dbReference>
<dbReference type="PDB" id="7Q08">
    <property type="method" value="EM"/>
    <property type="resolution" value="2.56 A"/>
    <property type="chains" value="K=1-189"/>
</dbReference>
<dbReference type="PDB" id="7Q0F">
    <property type="method" value="EM"/>
    <property type="resolution" value="2.64 A"/>
    <property type="chains" value="K=1-189"/>
</dbReference>
<dbReference type="PDB" id="7Q0P">
    <property type="method" value="EM"/>
    <property type="resolution" value="2.77 A"/>
    <property type="chains" value="K=1-189"/>
</dbReference>
<dbReference type="PDB" id="7Q0R">
    <property type="method" value="EM"/>
    <property type="resolution" value="2.67 A"/>
    <property type="chains" value="K=1-189"/>
</dbReference>
<dbReference type="PDB" id="8C3A">
    <property type="method" value="X-ray"/>
    <property type="resolution" value="3.00 A"/>
    <property type="chains" value="CW/L=1-189"/>
</dbReference>
<dbReference type="PDB" id="8OGJ">
    <property type="method" value="EM"/>
    <property type="resolution" value="3.10 A"/>
    <property type="chains" value="K=1-189"/>
</dbReference>
<dbReference type="PDB" id="8OH6">
    <property type="method" value="X-ray"/>
    <property type="resolution" value="3.35 A"/>
    <property type="chains" value="CW/L=1-189"/>
</dbReference>
<dbReference type="PDB" id="8OI5">
    <property type="method" value="X-ray"/>
    <property type="resolution" value="2.90 A"/>
    <property type="chains" value="CW/L=1-189"/>
</dbReference>
<dbReference type="PDB" id="8OJ3">
    <property type="method" value="X-ray"/>
    <property type="resolution" value="3.50 A"/>
    <property type="chains" value="CW/L=1-189"/>
</dbReference>
<dbReference type="PDBsum" id="7PZY"/>
<dbReference type="PDBsum" id="7Q08"/>
<dbReference type="PDBsum" id="7Q0F"/>
<dbReference type="PDBsum" id="7Q0P"/>
<dbReference type="PDBsum" id="7Q0R"/>
<dbReference type="PDBsum" id="8C3A"/>
<dbReference type="PDBsum" id="8OGJ"/>
<dbReference type="PDBsum" id="8OH6"/>
<dbReference type="PDBsum" id="8OI5"/>
<dbReference type="PDBsum" id="8OJ3"/>
<dbReference type="EMDB" id="EMD-13737"/>
<dbReference type="EMDB" id="EMD-13741"/>
<dbReference type="EMDB" id="EMD-13744"/>
<dbReference type="EMDB" id="EMD-13749"/>
<dbReference type="EMDB" id="EMD-13750"/>
<dbReference type="SMR" id="A0A1D8PGY8"/>
<dbReference type="FunCoup" id="A0A1D8PGY8">
    <property type="interactions" value="1158"/>
</dbReference>
<dbReference type="STRING" id="237561.A0A1D8PGY8"/>
<dbReference type="EnsemblFungi" id="C2_03820C_A-T">
    <property type="protein sequence ID" value="C2_03820C_A-T-p1"/>
    <property type="gene ID" value="C2_03820C_A"/>
</dbReference>
<dbReference type="GeneID" id="30515104"/>
<dbReference type="KEGG" id="cal:CAALFM_C203820CA"/>
<dbReference type="CGD" id="CAL0000197665">
    <property type="gene designation" value="RPS9B"/>
</dbReference>
<dbReference type="VEuPathDB" id="FungiDB:C2_03820C_A"/>
<dbReference type="eggNOG" id="KOG3301">
    <property type="taxonomic scope" value="Eukaryota"/>
</dbReference>
<dbReference type="InParanoid" id="A0A1D8PGY8"/>
<dbReference type="OMA" id="RQFITHG"/>
<dbReference type="OrthoDB" id="1697570at2759"/>
<dbReference type="Proteomes" id="UP000000559">
    <property type="component" value="Chromosome 2"/>
</dbReference>
<dbReference type="GO" id="GO:0022627">
    <property type="term" value="C:cytosolic small ribosomal subunit"/>
    <property type="evidence" value="ECO:0000318"/>
    <property type="project" value="GO_Central"/>
</dbReference>
<dbReference type="GO" id="GO:0019843">
    <property type="term" value="F:rRNA binding"/>
    <property type="evidence" value="ECO:0000318"/>
    <property type="project" value="GO_Central"/>
</dbReference>
<dbReference type="GO" id="GO:0003735">
    <property type="term" value="F:structural constituent of ribosome"/>
    <property type="evidence" value="ECO:0000318"/>
    <property type="project" value="GO_Central"/>
</dbReference>
<dbReference type="GO" id="GO:0042274">
    <property type="term" value="P:ribosomal small subunit biogenesis"/>
    <property type="evidence" value="ECO:0000318"/>
    <property type="project" value="GO_Central"/>
</dbReference>
<dbReference type="GO" id="GO:0006412">
    <property type="term" value="P:translation"/>
    <property type="evidence" value="ECO:0007669"/>
    <property type="project" value="InterPro"/>
</dbReference>
<dbReference type="CDD" id="cd00165">
    <property type="entry name" value="S4"/>
    <property type="match status" value="1"/>
</dbReference>
<dbReference type="FunFam" id="3.10.290.10:FF:000021">
    <property type="entry name" value="40S ribosomal protein S9"/>
    <property type="match status" value="1"/>
</dbReference>
<dbReference type="Gene3D" id="3.10.290.10">
    <property type="entry name" value="RNA-binding S4 domain"/>
    <property type="match status" value="1"/>
</dbReference>
<dbReference type="InterPro" id="IPR022801">
    <property type="entry name" value="Ribosomal_uS4"/>
</dbReference>
<dbReference type="InterPro" id="IPR018079">
    <property type="entry name" value="Ribosomal_uS4_CS"/>
</dbReference>
<dbReference type="InterPro" id="IPR005710">
    <property type="entry name" value="Ribosomal_uS4_euk/arc"/>
</dbReference>
<dbReference type="InterPro" id="IPR001912">
    <property type="entry name" value="Ribosomal_uS4_N"/>
</dbReference>
<dbReference type="InterPro" id="IPR002942">
    <property type="entry name" value="S4_RNA-bd"/>
</dbReference>
<dbReference type="InterPro" id="IPR036986">
    <property type="entry name" value="S4_RNA-bd_sf"/>
</dbReference>
<dbReference type="NCBIfam" id="NF003139">
    <property type="entry name" value="PRK04051.1"/>
    <property type="match status" value="1"/>
</dbReference>
<dbReference type="NCBIfam" id="TIGR01018">
    <property type="entry name" value="uS4_arch"/>
    <property type="match status" value="1"/>
</dbReference>
<dbReference type="PANTHER" id="PTHR11831">
    <property type="entry name" value="30S 40S RIBOSOMAL PROTEIN"/>
    <property type="match status" value="1"/>
</dbReference>
<dbReference type="PANTHER" id="PTHR11831:SF5">
    <property type="entry name" value="40S RIBOSOMAL PROTEIN S9"/>
    <property type="match status" value="1"/>
</dbReference>
<dbReference type="Pfam" id="PF00163">
    <property type="entry name" value="Ribosomal_S4"/>
    <property type="match status" value="1"/>
</dbReference>
<dbReference type="Pfam" id="PF01479">
    <property type="entry name" value="S4"/>
    <property type="match status" value="1"/>
</dbReference>
<dbReference type="SMART" id="SM01390">
    <property type="entry name" value="Ribosomal_S4"/>
    <property type="match status" value="1"/>
</dbReference>
<dbReference type="SMART" id="SM00363">
    <property type="entry name" value="S4"/>
    <property type="match status" value="1"/>
</dbReference>
<dbReference type="SUPFAM" id="SSF55174">
    <property type="entry name" value="Alpha-L RNA-binding motif"/>
    <property type="match status" value="1"/>
</dbReference>
<dbReference type="PROSITE" id="PS00632">
    <property type="entry name" value="RIBOSOMAL_S4"/>
    <property type="match status" value="1"/>
</dbReference>
<dbReference type="PROSITE" id="PS50889">
    <property type="entry name" value="S4"/>
    <property type="match status" value="1"/>
</dbReference>
<sequence>MPRAPRTYSKTYSVPKRPYESARLDAELKLAGEYGLKNKREIYRIGFQLSKIRRAARDLLTRDEKDPKRLFEGNALIRRLVRIGVLSEDKMKLDYVLALKPEDFLERRLQTQVFKLGLARSIHHARVLITQRHIAVGKQIVNIPSFTVRLDSQKHIDFAHNSPYGGGRAGRVKRKNQGKGGEEGAEEEE</sequence>
<name>RS9B_CANAL</name>
<accession>A0A1D8PGY8</accession>
<reference key="1">
    <citation type="journal article" date="2004" name="Proc. Natl. Acad. Sci. U.S.A.">
        <title>The diploid genome sequence of Candida albicans.</title>
        <authorList>
            <person name="Jones T."/>
            <person name="Federspiel N.A."/>
            <person name="Chibana H."/>
            <person name="Dungan J."/>
            <person name="Kalman S."/>
            <person name="Magee B.B."/>
            <person name="Newport G."/>
            <person name="Thorstenson Y.R."/>
            <person name="Agabian N."/>
            <person name="Magee P.T."/>
            <person name="Davis R.W."/>
            <person name="Scherer S."/>
        </authorList>
    </citation>
    <scope>NUCLEOTIDE SEQUENCE [LARGE SCALE GENOMIC DNA]</scope>
    <source>
        <strain>SC5314 / ATCC MYA-2876</strain>
    </source>
</reference>
<reference key="2">
    <citation type="journal article" date="2007" name="Genome Biol.">
        <title>Assembly of the Candida albicans genome into sixteen supercontigs aligned on the eight chromosomes.</title>
        <authorList>
            <person name="van het Hoog M."/>
            <person name="Rast T.J."/>
            <person name="Martchenko M."/>
            <person name="Grindle S."/>
            <person name="Dignard D."/>
            <person name="Hogues H."/>
            <person name="Cuomo C."/>
            <person name="Berriman M."/>
            <person name="Scherer S."/>
            <person name="Magee B.B."/>
            <person name="Whiteway M."/>
            <person name="Chibana H."/>
            <person name="Nantel A."/>
            <person name="Magee P.T."/>
        </authorList>
    </citation>
    <scope>GENOME REANNOTATION</scope>
    <source>
        <strain>SC5314 / ATCC MYA-2876</strain>
    </source>
</reference>
<reference key="3">
    <citation type="journal article" date="2013" name="Genome Biol.">
        <title>Assembly of a phased diploid Candida albicans genome facilitates allele-specific measurements and provides a simple model for repeat and indel structure.</title>
        <authorList>
            <person name="Muzzey D."/>
            <person name="Schwartz K."/>
            <person name="Weissman J.S."/>
            <person name="Sherlock G."/>
        </authorList>
    </citation>
    <scope>NUCLEOTIDE SEQUENCE [LARGE SCALE GENOMIC DNA]</scope>
    <scope>GENOME REANNOTATION</scope>
    <source>
        <strain>SC5314 / ATCC MYA-2876</strain>
    </source>
</reference>
<reference evidence="8 9 10" key="4">
    <citation type="journal article" date="2022" name="Sci. Adv.">
        <title>E-site drug specificity of the human pathogen Candida albicans ribosome.</title>
        <authorList>
            <person name="Zgadzay Y."/>
            <person name="Kolosova O."/>
            <person name="Stetsenko A."/>
            <person name="Wu C."/>
            <person name="Bruchlen D."/>
            <person name="Usachev K."/>
            <person name="Validov S."/>
            <person name="Jenner L."/>
            <person name="Rogachev A."/>
            <person name="Yusupova G."/>
            <person name="Sachs M.S."/>
            <person name="Guskov A."/>
            <person name="Yusupov M."/>
        </authorList>
    </citation>
    <scope>STRUCTURE BY ELECTRON MICROSCOPY (2.32 ANGSTROMS) OF THE 80S RIBOSOME</scope>
    <scope>SUBUNIT</scope>
</reference>
<protein>
    <recommendedName>
        <fullName evidence="5">Small ribosomal subunit protein uS4</fullName>
    </recommendedName>
    <alternativeName>
        <fullName>40S ribosomal protein S9B</fullName>
    </alternativeName>
</protein>
<evidence type="ECO:0000250" key="1">
    <source>
        <dbReference type="UniProtKB" id="O13516"/>
    </source>
</evidence>
<evidence type="ECO:0000255" key="2">
    <source>
        <dbReference type="PROSITE-ProRule" id="PRU00182"/>
    </source>
</evidence>
<evidence type="ECO:0000256" key="3">
    <source>
        <dbReference type="SAM" id="MobiDB-lite"/>
    </source>
</evidence>
<evidence type="ECO:0000269" key="4">
    <source>
    </source>
</evidence>
<evidence type="ECO:0000303" key="5">
    <source>
    </source>
</evidence>
<evidence type="ECO:0000305" key="6"/>
<evidence type="ECO:0000305" key="7">
    <source>
    </source>
</evidence>
<evidence type="ECO:0007744" key="8">
    <source>
        <dbReference type="PDB" id="7PZY"/>
    </source>
</evidence>
<evidence type="ECO:0007744" key="9">
    <source>
        <dbReference type="PDB" id="7Q0F"/>
    </source>
</evidence>
<evidence type="ECO:0007744" key="10">
    <source>
        <dbReference type="PDB" id="7Q0P"/>
    </source>
</evidence>
<proteinExistence type="evidence at protein level"/>
<gene>
    <name type="primary">RPS9B</name>
    <name type="ordered locus">orf19.838.1</name>
    <name type="ORF">CAALFM_C203820CA</name>
</gene>
<feature type="chain" id="PRO_0000456547" description="Small ribosomal subunit protein uS4">
    <location>
        <begin position="1"/>
        <end position="189"/>
    </location>
</feature>
<feature type="domain" description="S4 RNA-binding" evidence="2">
    <location>
        <begin position="107"/>
        <end position="178"/>
    </location>
</feature>
<feature type="region of interest" description="Disordered" evidence="3">
    <location>
        <begin position="160"/>
        <end position="189"/>
    </location>
</feature>
<organism>
    <name type="scientific">Candida albicans (strain SC5314 / ATCC MYA-2876)</name>
    <name type="common">Yeast</name>
    <dbReference type="NCBI Taxonomy" id="237561"/>
    <lineage>
        <taxon>Eukaryota</taxon>
        <taxon>Fungi</taxon>
        <taxon>Dikarya</taxon>
        <taxon>Ascomycota</taxon>
        <taxon>Saccharomycotina</taxon>
        <taxon>Pichiomycetes</taxon>
        <taxon>Debaryomycetaceae</taxon>
        <taxon>Candida/Lodderomyces clade</taxon>
        <taxon>Candida</taxon>
    </lineage>
</organism>